<accession>Q756E2</accession>
<feature type="chain" id="PRO_0000227898" description="Adenine phosphoribosyltransferase">
    <location>
        <begin position="1"/>
        <end position="187"/>
    </location>
</feature>
<feature type="binding site" evidence="1">
    <location>
        <begin position="133"/>
        <end position="137"/>
    </location>
    <ligand>
        <name>AMP</name>
        <dbReference type="ChEBI" id="CHEBI:456215"/>
    </ligand>
</feature>
<keyword id="KW-0963">Cytoplasm</keyword>
<keyword id="KW-0328">Glycosyltransferase</keyword>
<keyword id="KW-0460">Magnesium</keyword>
<keyword id="KW-0479">Metal-binding</keyword>
<keyword id="KW-0539">Nucleus</keyword>
<keyword id="KW-0660">Purine salvage</keyword>
<keyword id="KW-1185">Reference proteome</keyword>
<keyword id="KW-0808">Transferase</keyword>
<evidence type="ECO:0000250" key="1"/>
<evidence type="ECO:0000305" key="2"/>
<dbReference type="EC" id="2.4.2.7"/>
<dbReference type="EMBL" id="AE016818">
    <property type="protein sequence ID" value="AAS53005.1"/>
    <property type="molecule type" value="Genomic_DNA"/>
</dbReference>
<dbReference type="RefSeq" id="NP_985181.1">
    <property type="nucleotide sequence ID" value="NM_210535.1"/>
</dbReference>
<dbReference type="SMR" id="Q756E2"/>
<dbReference type="FunCoup" id="Q756E2">
    <property type="interactions" value="573"/>
</dbReference>
<dbReference type="STRING" id="284811.Q756E2"/>
<dbReference type="EnsemblFungi" id="AAS53005">
    <property type="protein sequence ID" value="AAS53005"/>
    <property type="gene ID" value="AGOS_AER325W"/>
</dbReference>
<dbReference type="GeneID" id="4621394"/>
<dbReference type="KEGG" id="ago:AGOS_AER325W"/>
<dbReference type="eggNOG" id="KOG1712">
    <property type="taxonomic scope" value="Eukaryota"/>
</dbReference>
<dbReference type="HOGENOM" id="CLU_063339_1_0_1"/>
<dbReference type="InParanoid" id="Q756E2"/>
<dbReference type="OMA" id="ITHFVYH"/>
<dbReference type="OrthoDB" id="363185at2759"/>
<dbReference type="UniPathway" id="UPA00588">
    <property type="reaction ID" value="UER00646"/>
</dbReference>
<dbReference type="Proteomes" id="UP000000591">
    <property type="component" value="Chromosome V"/>
</dbReference>
<dbReference type="GO" id="GO:0005737">
    <property type="term" value="C:cytoplasm"/>
    <property type="evidence" value="ECO:0000318"/>
    <property type="project" value="GO_Central"/>
</dbReference>
<dbReference type="GO" id="GO:0005634">
    <property type="term" value="C:nucleus"/>
    <property type="evidence" value="ECO:0007669"/>
    <property type="project" value="UniProtKB-SubCell"/>
</dbReference>
<dbReference type="GO" id="GO:0002055">
    <property type="term" value="F:adenine binding"/>
    <property type="evidence" value="ECO:0000318"/>
    <property type="project" value="GO_Central"/>
</dbReference>
<dbReference type="GO" id="GO:0003999">
    <property type="term" value="F:adenine phosphoribosyltransferase activity"/>
    <property type="evidence" value="ECO:0000318"/>
    <property type="project" value="GO_Central"/>
</dbReference>
<dbReference type="GO" id="GO:0016208">
    <property type="term" value="F:AMP binding"/>
    <property type="evidence" value="ECO:0000318"/>
    <property type="project" value="GO_Central"/>
</dbReference>
<dbReference type="GO" id="GO:0046872">
    <property type="term" value="F:metal ion binding"/>
    <property type="evidence" value="ECO:0007669"/>
    <property type="project" value="UniProtKB-KW"/>
</dbReference>
<dbReference type="GO" id="GO:0006168">
    <property type="term" value="P:adenine salvage"/>
    <property type="evidence" value="ECO:0000318"/>
    <property type="project" value="GO_Central"/>
</dbReference>
<dbReference type="GO" id="GO:0044209">
    <property type="term" value="P:AMP salvage"/>
    <property type="evidence" value="ECO:0000318"/>
    <property type="project" value="GO_Central"/>
</dbReference>
<dbReference type="GO" id="GO:0006166">
    <property type="term" value="P:purine ribonucleoside salvage"/>
    <property type="evidence" value="ECO:0007669"/>
    <property type="project" value="UniProtKB-KW"/>
</dbReference>
<dbReference type="CDD" id="cd06223">
    <property type="entry name" value="PRTases_typeI"/>
    <property type="match status" value="1"/>
</dbReference>
<dbReference type="FunFam" id="3.40.50.2020:FF:000004">
    <property type="entry name" value="Adenine phosphoribosyltransferase"/>
    <property type="match status" value="1"/>
</dbReference>
<dbReference type="Gene3D" id="3.40.50.2020">
    <property type="match status" value="1"/>
</dbReference>
<dbReference type="HAMAP" id="MF_00004">
    <property type="entry name" value="Aden_phosphoribosyltr"/>
    <property type="match status" value="1"/>
</dbReference>
<dbReference type="InterPro" id="IPR005764">
    <property type="entry name" value="Ade_phspho_trans"/>
</dbReference>
<dbReference type="InterPro" id="IPR000836">
    <property type="entry name" value="PRibTrfase_dom"/>
</dbReference>
<dbReference type="InterPro" id="IPR029057">
    <property type="entry name" value="PRTase-like"/>
</dbReference>
<dbReference type="InterPro" id="IPR050054">
    <property type="entry name" value="UPRTase/APRTase"/>
</dbReference>
<dbReference type="NCBIfam" id="TIGR01090">
    <property type="entry name" value="apt"/>
    <property type="match status" value="1"/>
</dbReference>
<dbReference type="NCBIfam" id="NF002636">
    <property type="entry name" value="PRK02304.1-5"/>
    <property type="match status" value="1"/>
</dbReference>
<dbReference type="PANTHER" id="PTHR32315">
    <property type="entry name" value="ADENINE PHOSPHORIBOSYLTRANSFERASE"/>
    <property type="match status" value="1"/>
</dbReference>
<dbReference type="PANTHER" id="PTHR32315:SF3">
    <property type="entry name" value="ADENINE PHOSPHORIBOSYLTRANSFERASE"/>
    <property type="match status" value="1"/>
</dbReference>
<dbReference type="Pfam" id="PF00156">
    <property type="entry name" value="Pribosyltran"/>
    <property type="match status" value="1"/>
</dbReference>
<dbReference type="SUPFAM" id="SSF53271">
    <property type="entry name" value="PRTase-like"/>
    <property type="match status" value="1"/>
</dbReference>
<dbReference type="PROSITE" id="PS00103">
    <property type="entry name" value="PUR_PYR_PR_TRANSFER"/>
    <property type="match status" value="1"/>
</dbReference>
<gene>
    <name type="primary">APT1</name>
    <name type="ordered locus">AER325W</name>
</gene>
<sequence>MSINEYAKELKAALAQYPNFPKEGVLFEDFLPIFRSPQLFQKLIDAFKMHLAEAFPETKIDYLVGLESRGFLFGPSLALAIGAGFVPVRKAGKLPGQVVKTTYVKEYEEDVFEMQVDSIPVGATVVVVDDILATGGSAGAAGDLIKQLGATILEFIFVMELDFLKGREKLQAPVFTLLQGQEEALGN</sequence>
<reference key="1">
    <citation type="journal article" date="2004" name="Science">
        <title>The Ashbya gossypii genome as a tool for mapping the ancient Saccharomyces cerevisiae genome.</title>
        <authorList>
            <person name="Dietrich F.S."/>
            <person name="Voegeli S."/>
            <person name="Brachat S."/>
            <person name="Lerch A."/>
            <person name="Gates K."/>
            <person name="Steiner S."/>
            <person name="Mohr C."/>
            <person name="Poehlmann R."/>
            <person name="Luedi P."/>
            <person name="Choi S."/>
            <person name="Wing R.A."/>
            <person name="Flavier A."/>
            <person name="Gaffney T.D."/>
            <person name="Philippsen P."/>
        </authorList>
    </citation>
    <scope>NUCLEOTIDE SEQUENCE [LARGE SCALE GENOMIC DNA]</scope>
    <source>
        <strain>ATCC 10895 / CBS 109.51 / FGSC 9923 / NRRL Y-1056</strain>
    </source>
</reference>
<reference key="2">
    <citation type="journal article" date="2013" name="G3 (Bethesda)">
        <title>Genomes of Ashbya fungi isolated from insects reveal four mating-type loci, numerous translocations, lack of transposons, and distinct gene duplications.</title>
        <authorList>
            <person name="Dietrich F.S."/>
            <person name="Voegeli S."/>
            <person name="Kuo S."/>
            <person name="Philippsen P."/>
        </authorList>
    </citation>
    <scope>GENOME REANNOTATION</scope>
    <source>
        <strain>ATCC 10895 / CBS 109.51 / FGSC 9923 / NRRL Y-1056</strain>
    </source>
</reference>
<proteinExistence type="inferred from homology"/>
<name>APT_EREGS</name>
<protein>
    <recommendedName>
        <fullName>Adenine phosphoribosyltransferase</fullName>
        <shortName>APRT</shortName>
        <ecNumber>2.4.2.7</ecNumber>
    </recommendedName>
</protein>
<comment type="function">
    <text evidence="1">Catalyzes a salvage reaction resulting in the formation of AMP, that is energically less costly than de novo synthesis.</text>
</comment>
<comment type="catalytic activity">
    <reaction>
        <text>AMP + diphosphate = 5-phospho-alpha-D-ribose 1-diphosphate + adenine</text>
        <dbReference type="Rhea" id="RHEA:16609"/>
        <dbReference type="ChEBI" id="CHEBI:16708"/>
        <dbReference type="ChEBI" id="CHEBI:33019"/>
        <dbReference type="ChEBI" id="CHEBI:58017"/>
        <dbReference type="ChEBI" id="CHEBI:456215"/>
        <dbReference type="EC" id="2.4.2.7"/>
    </reaction>
</comment>
<comment type="cofactor">
    <cofactor evidence="1">
        <name>Mg(2+)</name>
        <dbReference type="ChEBI" id="CHEBI:18420"/>
    </cofactor>
</comment>
<comment type="pathway">
    <text>Purine metabolism; AMP biosynthesis via salvage pathway; AMP from adenine: step 1/1.</text>
</comment>
<comment type="subunit">
    <text evidence="1">Homodimer.</text>
</comment>
<comment type="subcellular location">
    <subcellularLocation>
        <location evidence="1">Cytoplasm</location>
    </subcellularLocation>
    <subcellularLocation>
        <location evidence="1">Nucleus</location>
    </subcellularLocation>
</comment>
<comment type="similarity">
    <text evidence="2">Belongs to the purine/pyrimidine phosphoribosyltransferase family.</text>
</comment>
<organism>
    <name type="scientific">Eremothecium gossypii (strain ATCC 10895 / CBS 109.51 / FGSC 9923 / NRRL Y-1056)</name>
    <name type="common">Yeast</name>
    <name type="synonym">Ashbya gossypii</name>
    <dbReference type="NCBI Taxonomy" id="284811"/>
    <lineage>
        <taxon>Eukaryota</taxon>
        <taxon>Fungi</taxon>
        <taxon>Dikarya</taxon>
        <taxon>Ascomycota</taxon>
        <taxon>Saccharomycotina</taxon>
        <taxon>Saccharomycetes</taxon>
        <taxon>Saccharomycetales</taxon>
        <taxon>Saccharomycetaceae</taxon>
        <taxon>Eremothecium</taxon>
    </lineage>
</organism>